<gene>
    <name evidence="11 15" type="primary">SLC2A14</name>
    <name evidence="7" type="synonym">GLUT14</name>
</gene>
<accession>Q8TDB8</accession>
<accession>B3KVB5</accession>
<accession>B3KWW7</accession>
<accession>B7Z844</accession>
<accession>B7ZAC3</accession>
<accession>Q6UY84</accession>
<accession>Q8TDB9</accession>
<dbReference type="EMBL" id="AF481878">
    <property type="protein sequence ID" value="AAL89709.1"/>
    <property type="molecule type" value="mRNA"/>
</dbReference>
<dbReference type="EMBL" id="AF481879">
    <property type="protein sequence ID" value="AAL89710.1"/>
    <property type="molecule type" value="mRNA"/>
</dbReference>
<dbReference type="EMBL" id="AY357941">
    <property type="protein sequence ID" value="AAQ63763.1"/>
    <property type="molecule type" value="mRNA"/>
</dbReference>
<dbReference type="EMBL" id="AK122783">
    <property type="protein sequence ID" value="BAG53727.1"/>
    <property type="molecule type" value="mRNA"/>
</dbReference>
<dbReference type="EMBL" id="AK126026">
    <property type="protein sequence ID" value="BAG54279.1"/>
    <property type="molecule type" value="mRNA"/>
</dbReference>
<dbReference type="EMBL" id="AK302881">
    <property type="protein sequence ID" value="BAH13830.1"/>
    <property type="molecule type" value="mRNA"/>
</dbReference>
<dbReference type="EMBL" id="AK316238">
    <property type="protein sequence ID" value="BAH14609.1"/>
    <property type="molecule type" value="mRNA"/>
</dbReference>
<dbReference type="EMBL" id="AL110298">
    <property type="protein sequence ID" value="CAB53739.2"/>
    <property type="molecule type" value="mRNA"/>
</dbReference>
<dbReference type="EMBL" id="AC006517">
    <property type="status" value="NOT_ANNOTATED_CDS"/>
    <property type="molecule type" value="Genomic_DNA"/>
</dbReference>
<dbReference type="EMBL" id="AC007536">
    <property type="status" value="NOT_ANNOTATED_CDS"/>
    <property type="molecule type" value="Genomic_DNA"/>
</dbReference>
<dbReference type="EMBL" id="AC124891">
    <property type="status" value="NOT_ANNOTATED_CDS"/>
    <property type="molecule type" value="Genomic_DNA"/>
</dbReference>
<dbReference type="EMBL" id="CH471116">
    <property type="protein sequence ID" value="EAW88652.1"/>
    <property type="molecule type" value="Genomic_DNA"/>
</dbReference>
<dbReference type="EMBL" id="CH471116">
    <property type="protein sequence ID" value="EAW88653.1"/>
    <property type="molecule type" value="Genomic_DNA"/>
</dbReference>
<dbReference type="EMBL" id="BC060766">
    <property type="protein sequence ID" value="AAH60766.1"/>
    <property type="molecule type" value="mRNA"/>
</dbReference>
<dbReference type="CCDS" id="CCDS66300.1">
    <molecule id="Q8TDB8-4"/>
</dbReference>
<dbReference type="CCDS" id="CCDS66301.1">
    <molecule id="Q8TDB8-2"/>
</dbReference>
<dbReference type="CCDS" id="CCDS66302.1">
    <molecule id="Q8TDB8-5"/>
</dbReference>
<dbReference type="CCDS" id="CCDS8585.1">
    <molecule id="Q8TDB8-1"/>
</dbReference>
<dbReference type="RefSeq" id="NP_001273162.1">
    <molecule id="Q8TDB8-1"/>
    <property type="nucleotide sequence ID" value="NM_001286233.2"/>
</dbReference>
<dbReference type="RefSeq" id="NP_001273163.1">
    <molecule id="Q8TDB8-2"/>
    <property type="nucleotide sequence ID" value="NM_001286234.2"/>
</dbReference>
<dbReference type="RefSeq" id="NP_001273164.1">
    <molecule id="Q8TDB8-2"/>
    <property type="nucleotide sequence ID" value="NM_001286235.2"/>
</dbReference>
<dbReference type="RefSeq" id="NP_001273165.1">
    <molecule id="Q8TDB8-4"/>
    <property type="nucleotide sequence ID" value="NM_001286236.2"/>
</dbReference>
<dbReference type="RefSeq" id="NP_001273166.1">
    <molecule id="Q8TDB8-5"/>
    <property type="nucleotide sequence ID" value="NM_001286237.2"/>
</dbReference>
<dbReference type="RefSeq" id="NP_703150.1">
    <molecule id="Q8TDB8-1"/>
    <property type="nucleotide sequence ID" value="NM_153449.4"/>
</dbReference>
<dbReference type="RefSeq" id="XP_005253372.1">
    <property type="nucleotide sequence ID" value="XM_005253315.3"/>
</dbReference>
<dbReference type="RefSeq" id="XP_005253374.1">
    <property type="nucleotide sequence ID" value="XM_005253317.4"/>
</dbReference>
<dbReference type="RefSeq" id="XP_011518864.1">
    <property type="nucleotide sequence ID" value="XM_011520562.1"/>
</dbReference>
<dbReference type="RefSeq" id="XP_011518865.1">
    <property type="nucleotide sequence ID" value="XM_011520563.2"/>
</dbReference>
<dbReference type="RefSeq" id="XP_011518866.1">
    <property type="nucleotide sequence ID" value="XM_011520564.2"/>
</dbReference>
<dbReference type="RefSeq" id="XP_011518867.1">
    <property type="nucleotide sequence ID" value="XM_011520565.2"/>
</dbReference>
<dbReference type="RefSeq" id="XP_016874335.1">
    <property type="nucleotide sequence ID" value="XM_017018846.1"/>
</dbReference>
<dbReference type="RefSeq" id="XP_016874336.1">
    <property type="nucleotide sequence ID" value="XM_017018847.1"/>
</dbReference>
<dbReference type="SMR" id="Q8TDB8"/>
<dbReference type="BioGRID" id="126837">
    <property type="interactions" value="29"/>
</dbReference>
<dbReference type="FunCoup" id="Q8TDB8">
    <property type="interactions" value="577"/>
</dbReference>
<dbReference type="IntAct" id="Q8TDB8">
    <property type="interactions" value="12"/>
</dbReference>
<dbReference type="STRING" id="9606.ENSP00000445929"/>
<dbReference type="BindingDB" id="Q8TDB8"/>
<dbReference type="ChEMBL" id="CHEMBL4295906"/>
<dbReference type="TCDB" id="2.A.1.1.90">
    <property type="family name" value="the major facilitator superfamily (mfs)"/>
</dbReference>
<dbReference type="GlyCosmos" id="Q8TDB8">
    <property type="glycosylation" value="1 site, No reported glycans"/>
</dbReference>
<dbReference type="GlyGen" id="Q8TDB8">
    <property type="glycosylation" value="6 sites, 1 N-linked glycan (1 site), 1 O-linked glycan (3 sites)"/>
</dbReference>
<dbReference type="iPTMnet" id="Q8TDB8"/>
<dbReference type="PhosphoSitePlus" id="Q8TDB8"/>
<dbReference type="BioMuta" id="SLC2A14"/>
<dbReference type="DMDM" id="68565598"/>
<dbReference type="jPOST" id="Q8TDB8"/>
<dbReference type="MassIVE" id="Q8TDB8"/>
<dbReference type="PaxDb" id="9606-ENSP00000445929"/>
<dbReference type="PeptideAtlas" id="Q8TDB8"/>
<dbReference type="ProteomicsDB" id="6924"/>
<dbReference type="ProteomicsDB" id="7059"/>
<dbReference type="ProteomicsDB" id="74258">
    <molecule id="Q8TDB8-1"/>
</dbReference>
<dbReference type="ProteomicsDB" id="74259">
    <molecule id="Q8TDB8-2"/>
</dbReference>
<dbReference type="ProteomicsDB" id="74260">
    <molecule id="Q8TDB8-3"/>
</dbReference>
<dbReference type="Pumba" id="Q8TDB8"/>
<dbReference type="Antibodypedia" id="53025">
    <property type="antibodies" value="55 antibodies from 6 providers"/>
</dbReference>
<dbReference type="DNASU" id="144195"/>
<dbReference type="Ensembl" id="ENST00000340749.9">
    <molecule id="Q8TDB8-2"/>
    <property type="protein sequence ID" value="ENSP00000340450.5"/>
    <property type="gene ID" value="ENSG00000173262.12"/>
</dbReference>
<dbReference type="Ensembl" id="ENST00000396589.6">
    <molecule id="Q8TDB8-1"/>
    <property type="protein sequence ID" value="ENSP00000379834.2"/>
    <property type="gene ID" value="ENSG00000173262.12"/>
</dbReference>
<dbReference type="Ensembl" id="ENST00000431042.7">
    <molecule id="Q8TDB8-2"/>
    <property type="protein sequence ID" value="ENSP00000407287.2"/>
    <property type="gene ID" value="ENSG00000173262.12"/>
</dbReference>
<dbReference type="Ensembl" id="ENST00000535295.5">
    <molecule id="Q8TDB8-4"/>
    <property type="protein sequence ID" value="ENSP00000440492.1"/>
    <property type="gene ID" value="ENSG00000173262.12"/>
</dbReference>
<dbReference type="Ensembl" id="ENST00000539924.5">
    <molecule id="Q8TDB8-5"/>
    <property type="protein sequence ID" value="ENSP00000445929.1"/>
    <property type="gene ID" value="ENSG00000173262.12"/>
</dbReference>
<dbReference type="Ensembl" id="ENST00000542505.5">
    <molecule id="Q8TDB8-3"/>
    <property type="protein sequence ID" value="ENSP00000438484.1"/>
    <property type="gene ID" value="ENSG00000173262.12"/>
</dbReference>
<dbReference type="Ensembl" id="ENST00000542546.5">
    <molecule id="Q8TDB8-4"/>
    <property type="protein sequence ID" value="ENSP00000443903.1"/>
    <property type="gene ID" value="ENSG00000173262.12"/>
</dbReference>
<dbReference type="Ensembl" id="ENST00000543909.5">
    <molecule id="Q8TDB8-1"/>
    <property type="protein sequence ID" value="ENSP00000440480.1"/>
    <property type="gene ID" value="ENSG00000173262.12"/>
</dbReference>
<dbReference type="Ensembl" id="ENST00000616981.4">
    <molecule id="Q8TDB8-1"/>
    <property type="protein sequence ID" value="ENSP00000482927.1"/>
    <property type="gene ID" value="ENSG00000173262.12"/>
</dbReference>
<dbReference type="GeneID" id="144195"/>
<dbReference type="KEGG" id="hsa:144195"/>
<dbReference type="MANE-Select" id="ENST00000431042.7">
    <molecule id="Q8TDB8-2"/>
    <property type="protein sequence ID" value="ENSP00000407287.2"/>
    <property type="RefSeq nucleotide sequence ID" value="NM_001286234.2"/>
    <property type="RefSeq protein sequence ID" value="NP_001273163.1"/>
</dbReference>
<dbReference type="UCSC" id="uc001qtk.5">
    <molecule id="Q8TDB8-1"/>
    <property type="organism name" value="human"/>
</dbReference>
<dbReference type="AGR" id="HGNC:18301"/>
<dbReference type="CTD" id="144195"/>
<dbReference type="DisGeNET" id="144195"/>
<dbReference type="GeneCards" id="SLC2A14"/>
<dbReference type="HGNC" id="HGNC:18301">
    <property type="gene designation" value="SLC2A14"/>
</dbReference>
<dbReference type="HPA" id="ENSG00000173262">
    <property type="expression patterns" value="Tissue enriched (testis)"/>
</dbReference>
<dbReference type="MIM" id="611039">
    <property type="type" value="gene"/>
</dbReference>
<dbReference type="neXtProt" id="NX_Q8TDB8"/>
<dbReference type="OpenTargets" id="ENSG00000173262"/>
<dbReference type="PharmGKB" id="PA134885058"/>
<dbReference type="VEuPathDB" id="HostDB:ENSG00000173262"/>
<dbReference type="eggNOG" id="KOG0569">
    <property type="taxonomic scope" value="Eukaryota"/>
</dbReference>
<dbReference type="GeneTree" id="ENSGT00940000162491"/>
<dbReference type="HOGENOM" id="CLU_001265_30_5_1"/>
<dbReference type="InParanoid" id="Q8TDB8"/>
<dbReference type="OMA" id="FMQTFAP"/>
<dbReference type="OrthoDB" id="4540492at2759"/>
<dbReference type="PAN-GO" id="Q8TDB8">
    <property type="GO annotations" value="5 GO annotations based on evolutionary models"/>
</dbReference>
<dbReference type="PhylomeDB" id="Q8TDB8"/>
<dbReference type="TreeFam" id="TF313762"/>
<dbReference type="PathwayCommons" id="Q8TDB8"/>
<dbReference type="Reactome" id="R-HSA-189200">
    <property type="pathway name" value="Cellular hexose transport"/>
</dbReference>
<dbReference type="SignaLink" id="Q8TDB8"/>
<dbReference type="BioGRID-ORCS" id="144195">
    <property type="hits" value="11 hits in 1088 CRISPR screens"/>
</dbReference>
<dbReference type="ChiTaRS" id="SLC2A14">
    <property type="organism name" value="human"/>
</dbReference>
<dbReference type="GeneWiki" id="SLC2A14"/>
<dbReference type="GenomeRNAi" id="144195"/>
<dbReference type="Pharos" id="Q8TDB8">
    <property type="development level" value="Tbio"/>
</dbReference>
<dbReference type="PRO" id="PR:Q8TDB8"/>
<dbReference type="Proteomes" id="UP000005640">
    <property type="component" value="Chromosome 12"/>
</dbReference>
<dbReference type="RNAct" id="Q8TDB8">
    <property type="molecule type" value="protein"/>
</dbReference>
<dbReference type="Bgee" id="ENSG00000173262">
    <property type="expression patterns" value="Expressed in left testis and 100 other cell types or tissues"/>
</dbReference>
<dbReference type="ExpressionAtlas" id="Q8TDB8">
    <property type="expression patterns" value="baseline and differential"/>
</dbReference>
<dbReference type="GO" id="GO:0016235">
    <property type="term" value="C:aggresome"/>
    <property type="evidence" value="ECO:0000314"/>
    <property type="project" value="HPA"/>
</dbReference>
<dbReference type="GO" id="GO:0005634">
    <property type="term" value="C:nucleus"/>
    <property type="evidence" value="ECO:0007005"/>
    <property type="project" value="UniProtKB"/>
</dbReference>
<dbReference type="GO" id="GO:0005886">
    <property type="term" value="C:plasma membrane"/>
    <property type="evidence" value="ECO:0000314"/>
    <property type="project" value="HPA"/>
</dbReference>
<dbReference type="GO" id="GO:0055056">
    <property type="term" value="F:D-glucose transmembrane transporter activity"/>
    <property type="evidence" value="ECO:0000314"/>
    <property type="project" value="UniProtKB"/>
</dbReference>
<dbReference type="GO" id="GO:0033300">
    <property type="term" value="F:dehydroascorbic acid transmembrane transporter activity"/>
    <property type="evidence" value="ECO:0000314"/>
    <property type="project" value="UniProtKB"/>
</dbReference>
<dbReference type="GO" id="GO:0030154">
    <property type="term" value="P:cell differentiation"/>
    <property type="evidence" value="ECO:0007669"/>
    <property type="project" value="UniProtKB-KW"/>
</dbReference>
<dbReference type="GO" id="GO:0046323">
    <property type="term" value="P:D-glucose import"/>
    <property type="evidence" value="ECO:0000318"/>
    <property type="project" value="GO_Central"/>
</dbReference>
<dbReference type="GO" id="GO:1904659">
    <property type="term" value="P:D-glucose transmembrane transport"/>
    <property type="evidence" value="ECO:0000314"/>
    <property type="project" value="UniProtKB"/>
</dbReference>
<dbReference type="GO" id="GO:0070837">
    <property type="term" value="P:dehydroascorbic acid transport"/>
    <property type="evidence" value="ECO:0000314"/>
    <property type="project" value="UniProtKB"/>
</dbReference>
<dbReference type="GO" id="GO:0007283">
    <property type="term" value="P:spermatogenesis"/>
    <property type="evidence" value="ECO:0007669"/>
    <property type="project" value="UniProtKB-KW"/>
</dbReference>
<dbReference type="CDD" id="cd17431">
    <property type="entry name" value="MFS_GLUT_Class1"/>
    <property type="match status" value="1"/>
</dbReference>
<dbReference type="FunFam" id="1.20.1250.20:FF:000040">
    <property type="entry name" value="Solute carrier family 2, facilitated glucose transporter member 1"/>
    <property type="match status" value="1"/>
</dbReference>
<dbReference type="Gene3D" id="1.20.1250.20">
    <property type="entry name" value="MFS general substrate transporter like domains"/>
    <property type="match status" value="1"/>
</dbReference>
<dbReference type="InterPro" id="IPR002945">
    <property type="entry name" value="Glc_transpt_3"/>
</dbReference>
<dbReference type="InterPro" id="IPR045263">
    <property type="entry name" value="GLUT"/>
</dbReference>
<dbReference type="InterPro" id="IPR020846">
    <property type="entry name" value="MFS_dom"/>
</dbReference>
<dbReference type="InterPro" id="IPR005828">
    <property type="entry name" value="MFS_sugar_transport-like"/>
</dbReference>
<dbReference type="InterPro" id="IPR036259">
    <property type="entry name" value="MFS_trans_sf"/>
</dbReference>
<dbReference type="InterPro" id="IPR003663">
    <property type="entry name" value="Sugar/inositol_transpt"/>
</dbReference>
<dbReference type="InterPro" id="IPR005829">
    <property type="entry name" value="Sugar_transporter_CS"/>
</dbReference>
<dbReference type="NCBIfam" id="TIGR00879">
    <property type="entry name" value="SP"/>
    <property type="match status" value="1"/>
</dbReference>
<dbReference type="PANTHER" id="PTHR23503">
    <property type="entry name" value="SOLUTE CARRIER FAMILY 2"/>
    <property type="match status" value="1"/>
</dbReference>
<dbReference type="PANTHER" id="PTHR23503:SF53">
    <property type="entry name" value="SOLUTE CARRIER FAMILY 2, FACILITATED GLUCOSE TRANSPORTER MEMBER 14"/>
    <property type="match status" value="1"/>
</dbReference>
<dbReference type="Pfam" id="PF00083">
    <property type="entry name" value="Sugar_tr"/>
    <property type="match status" value="1"/>
</dbReference>
<dbReference type="PRINTS" id="PR01192">
    <property type="entry name" value="GLUCTRSPORT3"/>
</dbReference>
<dbReference type="PRINTS" id="PR00171">
    <property type="entry name" value="SUGRTRNSPORT"/>
</dbReference>
<dbReference type="SUPFAM" id="SSF103473">
    <property type="entry name" value="MFS general substrate transporter"/>
    <property type="match status" value="1"/>
</dbReference>
<dbReference type="PROSITE" id="PS50850">
    <property type="entry name" value="MFS"/>
    <property type="match status" value="1"/>
</dbReference>
<dbReference type="PROSITE" id="PS00216">
    <property type="entry name" value="SUGAR_TRANSPORT_1"/>
    <property type="match status" value="1"/>
</dbReference>
<dbReference type="PROSITE" id="PS00217">
    <property type="entry name" value="SUGAR_TRANSPORT_2"/>
    <property type="match status" value="1"/>
</dbReference>
<reference key="1">
    <citation type="journal article" date="2002" name="Genomics">
        <title>GLUT14, a duplicon of GLUT3, is specifically expressed in testis as alternative splice forms.</title>
        <authorList>
            <person name="Wu X."/>
            <person name="Freeze H.H."/>
        </authorList>
    </citation>
    <scope>NUCLEOTIDE SEQUENCE [MRNA] (ISOFORMS 1 AND 2)</scope>
    <scope>TISSUE SPECIFICITY</scope>
    <source>
        <tissue>Testis</tissue>
    </source>
</reference>
<reference key="2">
    <citation type="submission" date="2003-09" db="EMBL/GenBank/DDBJ databases">
        <title>Cloning of an isoform of SCL2A14 gene related to spermatogenesis.</title>
        <authorList>
            <person name="Fang X."/>
            <person name="Wang H."/>
            <person name="Huo R."/>
            <person name="Lu L."/>
            <person name="Xu M."/>
            <person name="Xu Y.Z."/>
            <person name="Yin L.L."/>
            <person name="Li M.J."/>
            <person name="Zhou M.Z."/>
            <person name="Sha H.J."/>
        </authorList>
    </citation>
    <scope>NUCLEOTIDE SEQUENCE [MRNA] (ISOFORM 2)</scope>
    <source>
        <tissue>Testis</tissue>
    </source>
</reference>
<reference key="3">
    <citation type="journal article" date="2004" name="Nat. Genet.">
        <title>Complete sequencing and characterization of 21,243 full-length human cDNAs.</title>
        <authorList>
            <person name="Ota T."/>
            <person name="Suzuki Y."/>
            <person name="Nishikawa T."/>
            <person name="Otsuki T."/>
            <person name="Sugiyama T."/>
            <person name="Irie R."/>
            <person name="Wakamatsu A."/>
            <person name="Hayashi K."/>
            <person name="Sato H."/>
            <person name="Nagai K."/>
            <person name="Kimura K."/>
            <person name="Makita H."/>
            <person name="Sekine M."/>
            <person name="Obayashi M."/>
            <person name="Nishi T."/>
            <person name="Shibahara T."/>
            <person name="Tanaka T."/>
            <person name="Ishii S."/>
            <person name="Yamamoto J."/>
            <person name="Saito K."/>
            <person name="Kawai Y."/>
            <person name="Isono Y."/>
            <person name="Nakamura Y."/>
            <person name="Nagahari K."/>
            <person name="Murakami K."/>
            <person name="Yasuda T."/>
            <person name="Iwayanagi T."/>
            <person name="Wagatsuma M."/>
            <person name="Shiratori A."/>
            <person name="Sudo H."/>
            <person name="Hosoiri T."/>
            <person name="Kaku Y."/>
            <person name="Kodaira H."/>
            <person name="Kondo H."/>
            <person name="Sugawara M."/>
            <person name="Takahashi M."/>
            <person name="Kanda K."/>
            <person name="Yokoi T."/>
            <person name="Furuya T."/>
            <person name="Kikkawa E."/>
            <person name="Omura Y."/>
            <person name="Abe K."/>
            <person name="Kamihara K."/>
            <person name="Katsuta N."/>
            <person name="Sato K."/>
            <person name="Tanikawa M."/>
            <person name="Yamazaki M."/>
            <person name="Ninomiya K."/>
            <person name="Ishibashi T."/>
            <person name="Yamashita H."/>
            <person name="Murakawa K."/>
            <person name="Fujimori K."/>
            <person name="Tanai H."/>
            <person name="Kimata M."/>
            <person name="Watanabe M."/>
            <person name="Hiraoka S."/>
            <person name="Chiba Y."/>
            <person name="Ishida S."/>
            <person name="Ono Y."/>
            <person name="Takiguchi S."/>
            <person name="Watanabe S."/>
            <person name="Yosida M."/>
            <person name="Hotuta T."/>
            <person name="Kusano J."/>
            <person name="Kanehori K."/>
            <person name="Takahashi-Fujii A."/>
            <person name="Hara H."/>
            <person name="Tanase T.-O."/>
            <person name="Nomura Y."/>
            <person name="Togiya S."/>
            <person name="Komai F."/>
            <person name="Hara R."/>
            <person name="Takeuchi K."/>
            <person name="Arita M."/>
            <person name="Imose N."/>
            <person name="Musashino K."/>
            <person name="Yuuki H."/>
            <person name="Oshima A."/>
            <person name="Sasaki N."/>
            <person name="Aotsuka S."/>
            <person name="Yoshikawa Y."/>
            <person name="Matsunawa H."/>
            <person name="Ichihara T."/>
            <person name="Shiohata N."/>
            <person name="Sano S."/>
            <person name="Moriya S."/>
            <person name="Momiyama H."/>
            <person name="Satoh N."/>
            <person name="Takami S."/>
            <person name="Terashima Y."/>
            <person name="Suzuki O."/>
            <person name="Nakagawa S."/>
            <person name="Senoh A."/>
            <person name="Mizoguchi H."/>
            <person name="Goto Y."/>
            <person name="Shimizu F."/>
            <person name="Wakebe H."/>
            <person name="Hishigaki H."/>
            <person name="Watanabe T."/>
            <person name="Sugiyama A."/>
            <person name="Takemoto M."/>
            <person name="Kawakami B."/>
            <person name="Yamazaki M."/>
            <person name="Watanabe K."/>
            <person name="Kumagai A."/>
            <person name="Itakura S."/>
            <person name="Fukuzumi Y."/>
            <person name="Fujimori Y."/>
            <person name="Komiyama M."/>
            <person name="Tashiro H."/>
            <person name="Tanigami A."/>
            <person name="Fujiwara T."/>
            <person name="Ono T."/>
            <person name="Yamada K."/>
            <person name="Fujii Y."/>
            <person name="Ozaki K."/>
            <person name="Hirao M."/>
            <person name="Ohmori Y."/>
            <person name="Kawabata A."/>
            <person name="Hikiji T."/>
            <person name="Kobatake N."/>
            <person name="Inagaki H."/>
            <person name="Ikema Y."/>
            <person name="Okamoto S."/>
            <person name="Okitani R."/>
            <person name="Kawakami T."/>
            <person name="Noguchi S."/>
            <person name="Itoh T."/>
            <person name="Shigeta K."/>
            <person name="Senba T."/>
            <person name="Matsumura K."/>
            <person name="Nakajima Y."/>
            <person name="Mizuno T."/>
            <person name="Morinaga M."/>
            <person name="Sasaki M."/>
            <person name="Togashi T."/>
            <person name="Oyama M."/>
            <person name="Hata H."/>
            <person name="Watanabe M."/>
            <person name="Komatsu T."/>
            <person name="Mizushima-Sugano J."/>
            <person name="Satoh T."/>
            <person name="Shirai Y."/>
            <person name="Takahashi Y."/>
            <person name="Nakagawa K."/>
            <person name="Okumura K."/>
            <person name="Nagase T."/>
            <person name="Nomura N."/>
            <person name="Kikuchi H."/>
            <person name="Masuho Y."/>
            <person name="Yamashita R."/>
            <person name="Nakai K."/>
            <person name="Yada T."/>
            <person name="Nakamura Y."/>
            <person name="Ohara O."/>
            <person name="Isogai T."/>
            <person name="Sugano S."/>
        </authorList>
    </citation>
    <scope>NUCLEOTIDE SEQUENCE [LARGE SCALE MRNA] (ISOFORMS 1; 2; 4 AND 5)</scope>
    <source>
        <tissue>Testis</tissue>
    </source>
</reference>
<reference key="4">
    <citation type="journal article" date="2007" name="BMC Genomics">
        <title>The full-ORF clone resource of the German cDNA consortium.</title>
        <authorList>
            <person name="Bechtel S."/>
            <person name="Rosenfelder H."/>
            <person name="Duda A."/>
            <person name="Schmidt C.P."/>
            <person name="Ernst U."/>
            <person name="Wellenreuther R."/>
            <person name="Mehrle A."/>
            <person name="Schuster C."/>
            <person name="Bahr A."/>
            <person name="Bloecker H."/>
            <person name="Heubner D."/>
            <person name="Hoerlein A."/>
            <person name="Michel G."/>
            <person name="Wedler H."/>
            <person name="Koehrer K."/>
            <person name="Ottenwaelder B."/>
            <person name="Poustka A."/>
            <person name="Wiemann S."/>
            <person name="Schupp I."/>
        </authorList>
    </citation>
    <scope>NUCLEOTIDE SEQUENCE [LARGE SCALE MRNA] (ISOFORM 3)</scope>
    <source>
        <tissue>Fetal brain</tissue>
    </source>
</reference>
<reference key="5">
    <citation type="journal article" date="2006" name="Nature">
        <title>The finished DNA sequence of human chromosome 12.</title>
        <authorList>
            <person name="Scherer S.E."/>
            <person name="Muzny D.M."/>
            <person name="Buhay C.J."/>
            <person name="Chen R."/>
            <person name="Cree A."/>
            <person name="Ding Y."/>
            <person name="Dugan-Rocha S."/>
            <person name="Gill R."/>
            <person name="Gunaratne P."/>
            <person name="Harris R.A."/>
            <person name="Hawes A.C."/>
            <person name="Hernandez J."/>
            <person name="Hodgson A.V."/>
            <person name="Hume J."/>
            <person name="Jackson A."/>
            <person name="Khan Z.M."/>
            <person name="Kovar-Smith C."/>
            <person name="Lewis L.R."/>
            <person name="Lozado R.J."/>
            <person name="Metzker M.L."/>
            <person name="Milosavljevic A."/>
            <person name="Miner G.R."/>
            <person name="Montgomery K.T."/>
            <person name="Morgan M.B."/>
            <person name="Nazareth L.V."/>
            <person name="Scott G."/>
            <person name="Sodergren E."/>
            <person name="Song X.-Z."/>
            <person name="Steffen D."/>
            <person name="Lovering R.C."/>
            <person name="Wheeler D.A."/>
            <person name="Worley K.C."/>
            <person name="Yuan Y."/>
            <person name="Zhang Z."/>
            <person name="Adams C.Q."/>
            <person name="Ansari-Lari M.A."/>
            <person name="Ayele M."/>
            <person name="Brown M.J."/>
            <person name="Chen G."/>
            <person name="Chen Z."/>
            <person name="Clerc-Blankenburg K.P."/>
            <person name="Davis C."/>
            <person name="Delgado O."/>
            <person name="Dinh H.H."/>
            <person name="Draper H."/>
            <person name="Gonzalez-Garay M.L."/>
            <person name="Havlak P."/>
            <person name="Jackson L.R."/>
            <person name="Jacob L.S."/>
            <person name="Kelly S.H."/>
            <person name="Li L."/>
            <person name="Li Z."/>
            <person name="Liu J."/>
            <person name="Liu W."/>
            <person name="Lu J."/>
            <person name="Maheshwari M."/>
            <person name="Nguyen B.-V."/>
            <person name="Okwuonu G.O."/>
            <person name="Pasternak S."/>
            <person name="Perez L.M."/>
            <person name="Plopper F.J.H."/>
            <person name="Santibanez J."/>
            <person name="Shen H."/>
            <person name="Tabor P.E."/>
            <person name="Verduzco D."/>
            <person name="Waldron L."/>
            <person name="Wang Q."/>
            <person name="Williams G.A."/>
            <person name="Zhang J."/>
            <person name="Zhou J."/>
            <person name="Allen C.C."/>
            <person name="Amin A.G."/>
            <person name="Anyalebechi V."/>
            <person name="Bailey M."/>
            <person name="Barbaria J.A."/>
            <person name="Bimage K.E."/>
            <person name="Bryant N.P."/>
            <person name="Burch P.E."/>
            <person name="Burkett C.E."/>
            <person name="Burrell K.L."/>
            <person name="Calderon E."/>
            <person name="Cardenas V."/>
            <person name="Carter K."/>
            <person name="Casias K."/>
            <person name="Cavazos I."/>
            <person name="Cavazos S.R."/>
            <person name="Ceasar H."/>
            <person name="Chacko J."/>
            <person name="Chan S.N."/>
            <person name="Chavez D."/>
            <person name="Christopoulos C."/>
            <person name="Chu J."/>
            <person name="Cockrell R."/>
            <person name="Cox C.D."/>
            <person name="Dang M."/>
            <person name="Dathorne S.R."/>
            <person name="David R."/>
            <person name="Davis C.M."/>
            <person name="Davy-Carroll L."/>
            <person name="Deshazo D.R."/>
            <person name="Donlin J.E."/>
            <person name="D'Souza L."/>
            <person name="Eaves K.A."/>
            <person name="Egan A."/>
            <person name="Emery-Cohen A.J."/>
            <person name="Escotto M."/>
            <person name="Flagg N."/>
            <person name="Forbes L.D."/>
            <person name="Gabisi A.M."/>
            <person name="Garza M."/>
            <person name="Hamilton C."/>
            <person name="Henderson N."/>
            <person name="Hernandez O."/>
            <person name="Hines S."/>
            <person name="Hogues M.E."/>
            <person name="Huang M."/>
            <person name="Idlebird D.G."/>
            <person name="Johnson R."/>
            <person name="Jolivet A."/>
            <person name="Jones S."/>
            <person name="Kagan R."/>
            <person name="King L.M."/>
            <person name="Leal B."/>
            <person name="Lebow H."/>
            <person name="Lee S."/>
            <person name="LeVan J.M."/>
            <person name="Lewis L.C."/>
            <person name="London P."/>
            <person name="Lorensuhewa L.M."/>
            <person name="Loulseged H."/>
            <person name="Lovett D.A."/>
            <person name="Lucier A."/>
            <person name="Lucier R.L."/>
            <person name="Ma J."/>
            <person name="Madu R.C."/>
            <person name="Mapua P."/>
            <person name="Martindale A.D."/>
            <person name="Martinez E."/>
            <person name="Massey E."/>
            <person name="Mawhiney S."/>
            <person name="Meador M.G."/>
            <person name="Mendez S."/>
            <person name="Mercado C."/>
            <person name="Mercado I.C."/>
            <person name="Merritt C.E."/>
            <person name="Miner Z.L."/>
            <person name="Minja E."/>
            <person name="Mitchell T."/>
            <person name="Mohabbat F."/>
            <person name="Mohabbat K."/>
            <person name="Montgomery B."/>
            <person name="Moore N."/>
            <person name="Morris S."/>
            <person name="Munidasa M."/>
            <person name="Ngo R.N."/>
            <person name="Nguyen N.B."/>
            <person name="Nickerson E."/>
            <person name="Nwaokelemeh O.O."/>
            <person name="Nwokenkwo S."/>
            <person name="Obregon M."/>
            <person name="Oguh M."/>
            <person name="Oragunye N."/>
            <person name="Oviedo R.J."/>
            <person name="Parish B.J."/>
            <person name="Parker D.N."/>
            <person name="Parrish J."/>
            <person name="Parks K.L."/>
            <person name="Paul H.A."/>
            <person name="Payton B.A."/>
            <person name="Perez A."/>
            <person name="Perrin W."/>
            <person name="Pickens A."/>
            <person name="Primus E.L."/>
            <person name="Pu L.-L."/>
            <person name="Puazo M."/>
            <person name="Quiles M.M."/>
            <person name="Quiroz J.B."/>
            <person name="Rabata D."/>
            <person name="Reeves K."/>
            <person name="Ruiz S.J."/>
            <person name="Shao H."/>
            <person name="Sisson I."/>
            <person name="Sonaike T."/>
            <person name="Sorelle R.P."/>
            <person name="Sutton A.E."/>
            <person name="Svatek A.F."/>
            <person name="Svetz L.A."/>
            <person name="Tamerisa K.S."/>
            <person name="Taylor T.R."/>
            <person name="Teague B."/>
            <person name="Thomas N."/>
            <person name="Thorn R.D."/>
            <person name="Trejos Z.Y."/>
            <person name="Trevino B.K."/>
            <person name="Ukegbu O.N."/>
            <person name="Urban J.B."/>
            <person name="Vasquez L.I."/>
            <person name="Vera V.A."/>
            <person name="Villasana D.M."/>
            <person name="Wang L."/>
            <person name="Ward-Moore S."/>
            <person name="Warren J.T."/>
            <person name="Wei X."/>
            <person name="White F."/>
            <person name="Williamson A.L."/>
            <person name="Wleczyk R."/>
            <person name="Wooden H.S."/>
            <person name="Wooden S.H."/>
            <person name="Yen J."/>
            <person name="Yoon L."/>
            <person name="Yoon V."/>
            <person name="Zorrilla S.E."/>
            <person name="Nelson D."/>
            <person name="Kucherlapati R."/>
            <person name="Weinstock G."/>
            <person name="Gibbs R.A."/>
        </authorList>
    </citation>
    <scope>NUCLEOTIDE SEQUENCE [LARGE SCALE GENOMIC DNA]</scope>
</reference>
<reference key="6">
    <citation type="submission" date="2005-09" db="EMBL/GenBank/DDBJ databases">
        <authorList>
            <person name="Mural R.J."/>
            <person name="Istrail S."/>
            <person name="Sutton G.G."/>
            <person name="Florea L."/>
            <person name="Halpern A.L."/>
            <person name="Mobarry C.M."/>
            <person name="Lippert R."/>
            <person name="Walenz B."/>
            <person name="Shatkay H."/>
            <person name="Dew I."/>
            <person name="Miller J.R."/>
            <person name="Flanigan M.J."/>
            <person name="Edwards N.J."/>
            <person name="Bolanos R."/>
            <person name="Fasulo D."/>
            <person name="Halldorsson B.V."/>
            <person name="Hannenhalli S."/>
            <person name="Turner R."/>
            <person name="Yooseph S."/>
            <person name="Lu F."/>
            <person name="Nusskern D.R."/>
            <person name="Shue B.C."/>
            <person name="Zheng X.H."/>
            <person name="Zhong F."/>
            <person name="Delcher A.L."/>
            <person name="Huson D.H."/>
            <person name="Kravitz S.A."/>
            <person name="Mouchard L."/>
            <person name="Reinert K."/>
            <person name="Remington K.A."/>
            <person name="Clark A.G."/>
            <person name="Waterman M.S."/>
            <person name="Eichler E.E."/>
            <person name="Adams M.D."/>
            <person name="Hunkapiller M.W."/>
            <person name="Myers E.W."/>
            <person name="Venter J.C."/>
        </authorList>
    </citation>
    <scope>NUCLEOTIDE SEQUENCE [LARGE SCALE GENOMIC DNA]</scope>
</reference>
<reference key="7">
    <citation type="journal article" date="2004" name="Genome Res.">
        <title>The status, quality, and expansion of the NIH full-length cDNA project: the Mammalian Gene Collection (MGC).</title>
        <authorList>
            <consortium name="The MGC Project Team"/>
        </authorList>
    </citation>
    <scope>NUCLEOTIDE SEQUENCE [LARGE SCALE MRNA] (ISOFORM 2)</scope>
    <source>
        <tissue>Testis</tissue>
    </source>
</reference>
<reference key="8">
    <citation type="journal article" date="2016" name="Biochem. Cell Biol.">
        <title>The SLC2A14 gene: genomic locus, tissue expression, splice variants, and subcellular localization of the protein.</title>
        <authorList>
            <person name="Amir Shaghaghi M."/>
            <person name="Murphy B."/>
            <person name="Eck P."/>
        </authorList>
    </citation>
    <scope>SUBCELLULAR LOCATION</scope>
    <scope>TISSUE SPECIFICITY</scope>
</reference>
<reference key="9">
    <citation type="journal article" date="2017" name="Am. J. Clin. Nutr.">
        <title>The SLC2A14 gene, encoding the novel glucose/dehydroascorbate transporter GLUT14, is associated with inflammatory bowel disease.</title>
        <authorList>
            <person name="Amir Shaghaghi M."/>
            <person name="Zhouyao H."/>
            <person name="Tu H."/>
            <person name="El-Gabalawy H."/>
            <person name="Crow G.H."/>
            <person name="Levine M."/>
            <person name="Bernstein C.N."/>
            <person name="Eck P."/>
        </authorList>
    </citation>
    <scope>FUNCTION</scope>
    <scope>TRANSPORTER ACTIVITY</scope>
</reference>
<evidence type="ECO:0000250" key="1">
    <source>
        <dbReference type="UniProtKB" id="P11169"/>
    </source>
</evidence>
<evidence type="ECO:0000255" key="2"/>
<evidence type="ECO:0000256" key="3">
    <source>
        <dbReference type="SAM" id="MobiDB-lite"/>
    </source>
</evidence>
<evidence type="ECO:0000269" key="4">
    <source>
    </source>
</evidence>
<evidence type="ECO:0000269" key="5">
    <source>
    </source>
</evidence>
<evidence type="ECO:0000269" key="6">
    <source>
    </source>
</evidence>
<evidence type="ECO:0000303" key="7">
    <source>
    </source>
</evidence>
<evidence type="ECO:0000303" key="8">
    <source>
    </source>
</evidence>
<evidence type="ECO:0000303" key="9">
    <source>
    </source>
</evidence>
<evidence type="ECO:0000303" key="10">
    <source>
    </source>
</evidence>
<evidence type="ECO:0000303" key="11">
    <source>
    </source>
</evidence>
<evidence type="ECO:0000303" key="12">
    <source ref="2"/>
</evidence>
<evidence type="ECO:0000305" key="13"/>
<evidence type="ECO:0000305" key="14">
    <source>
    </source>
</evidence>
<evidence type="ECO:0000312" key="15">
    <source>
        <dbReference type="HGNC" id="HGNC:18301"/>
    </source>
</evidence>
<organism>
    <name type="scientific">Homo sapiens</name>
    <name type="common">Human</name>
    <dbReference type="NCBI Taxonomy" id="9606"/>
    <lineage>
        <taxon>Eukaryota</taxon>
        <taxon>Metazoa</taxon>
        <taxon>Chordata</taxon>
        <taxon>Craniata</taxon>
        <taxon>Vertebrata</taxon>
        <taxon>Euteleostomi</taxon>
        <taxon>Mammalia</taxon>
        <taxon>Eutheria</taxon>
        <taxon>Euarchontoglires</taxon>
        <taxon>Primates</taxon>
        <taxon>Haplorrhini</taxon>
        <taxon>Catarrhini</taxon>
        <taxon>Hominidae</taxon>
        <taxon>Homo</taxon>
    </lineage>
</organism>
<comment type="function">
    <text evidence="6">Hexose transporter that can mediate the transport of glucose and dehydroascorbate across the cell membrane.</text>
</comment>
<comment type="catalytic activity">
    <reaction evidence="6">
        <text>D-glucose(out) = D-glucose(in)</text>
        <dbReference type="Rhea" id="RHEA:60376"/>
        <dbReference type="ChEBI" id="CHEBI:4167"/>
    </reaction>
</comment>
<comment type="catalytic activity">
    <reaction evidence="6">
        <text>L-dehydroascorbate(out) = L-dehydroascorbate(in)</text>
        <dbReference type="Rhea" id="RHEA:60380"/>
        <dbReference type="ChEBI" id="CHEBI:58539"/>
    </reaction>
</comment>
<comment type="subcellular location">
    <subcellularLocation>
        <location evidence="5">Cell membrane</location>
        <topology evidence="2">Multi-pass membrane protein</topology>
    </subcellularLocation>
</comment>
<comment type="alternative products">
    <event type="alternative splicing"/>
    <isoform>
        <id>Q8TDB8-1</id>
        <name>1</name>
        <name evidence="7">GLUT14-L</name>
        <sequence type="displayed"/>
    </isoform>
    <isoform>
        <id>Q8TDB8-2</id>
        <name>2</name>
        <name evidence="7">GLUT14-S</name>
        <sequence type="described" ref="VSP_014450"/>
    </isoform>
    <isoform>
        <id>Q8TDB8-3</id>
        <name>3</name>
        <sequence type="described" ref="VSP_014449"/>
    </isoform>
    <isoform>
        <id>Q8TDB8-4</id>
        <name>4</name>
        <sequence type="described" ref="VSP_055253"/>
    </isoform>
    <isoform>
        <id>Q8TDB8-5</id>
        <name>5</name>
        <sequence type="described" ref="VSP_055254"/>
    </isoform>
</comment>
<comment type="tissue specificity">
    <text evidence="4 5">Mainly expressed in testis (PubMed:12504846, PubMed:27460888). Also expressed in small intestine, liver and kidney (PubMed:27460888).</text>
</comment>
<comment type="miscellaneous">
    <text evidence="14">GLUT14 is a recent (less than 5 M year old) duplication of GLUT3.</text>
</comment>
<comment type="similarity">
    <text evidence="13">Belongs to the major facilitator superfamily. Sugar transporter (TC 2.A.1.1) family. Glucose transporter subfamily.</text>
</comment>
<name>GTR14_HUMAN</name>
<keyword id="KW-0025">Alternative splicing</keyword>
<keyword id="KW-1003">Cell membrane</keyword>
<keyword id="KW-0217">Developmental protein</keyword>
<keyword id="KW-0221">Differentiation</keyword>
<keyword id="KW-0325">Glycoprotein</keyword>
<keyword id="KW-0472">Membrane</keyword>
<keyword id="KW-1267">Proteomics identification</keyword>
<keyword id="KW-1185">Reference proteome</keyword>
<keyword id="KW-0744">Spermatogenesis</keyword>
<keyword id="KW-0762">Sugar transport</keyword>
<keyword id="KW-0812">Transmembrane</keyword>
<keyword id="KW-1133">Transmembrane helix</keyword>
<keyword id="KW-0813">Transport</keyword>
<protein>
    <recommendedName>
        <fullName evidence="13">Solute carrier family 2, facilitated glucose transporter member 14</fullName>
    </recommendedName>
    <alternativeName>
        <fullName evidence="7">Glucose transporter type 14</fullName>
        <shortName evidence="7">GLUT-14</shortName>
    </alternativeName>
</protein>
<feature type="chain" id="PRO_0000050381" description="Solute carrier family 2, facilitated glucose transporter member 14">
    <location>
        <begin position="1"/>
        <end position="520"/>
    </location>
</feature>
<feature type="topological domain" description="Cytoplasmic" evidence="2">
    <location>
        <begin position="1"/>
        <end position="29"/>
    </location>
</feature>
<feature type="transmembrane region" description="Helical; Name=1" evidence="2">
    <location>
        <begin position="30"/>
        <end position="50"/>
    </location>
</feature>
<feature type="topological domain" description="Extracellular" evidence="2">
    <location>
        <begin position="51"/>
        <end position="88"/>
    </location>
</feature>
<feature type="transmembrane region" description="Helical; Name=2" evidence="2">
    <location>
        <begin position="89"/>
        <end position="109"/>
    </location>
</feature>
<feature type="topological domain" description="Cytoplasmic" evidence="2">
    <location>
        <begin position="110"/>
        <end position="117"/>
    </location>
</feature>
<feature type="transmembrane region" description="Helical; Name=3" evidence="2">
    <location>
        <begin position="118"/>
        <end position="138"/>
    </location>
</feature>
<feature type="topological domain" description="Extracellular" evidence="2">
    <location>
        <begin position="139"/>
        <end position="148"/>
    </location>
</feature>
<feature type="transmembrane region" description="Helical; Name=4" evidence="2">
    <location>
        <begin position="149"/>
        <end position="169"/>
    </location>
</feature>
<feature type="topological domain" description="Cytoplasmic" evidence="2">
    <location>
        <begin position="170"/>
        <end position="177"/>
    </location>
</feature>
<feature type="transmembrane region" description="Helical; Name=5" evidence="2">
    <location>
        <begin position="178"/>
        <end position="198"/>
    </location>
</feature>
<feature type="topological domain" description="Extracellular" evidence="2">
    <location>
        <begin position="199"/>
        <end position="207"/>
    </location>
</feature>
<feature type="transmembrane region" description="Helical; Name=6" evidence="2">
    <location>
        <begin position="208"/>
        <end position="228"/>
    </location>
</feature>
<feature type="topological domain" description="Cytoplasmic" evidence="2">
    <location>
        <begin position="229"/>
        <end position="293"/>
    </location>
</feature>
<feature type="transmembrane region" description="Helical; Name=7" evidence="2">
    <location>
        <begin position="294"/>
        <end position="314"/>
    </location>
</feature>
<feature type="topological domain" description="Extracellular" evidence="2">
    <location>
        <begin position="315"/>
        <end position="328"/>
    </location>
</feature>
<feature type="transmembrane region" description="Helical; Name=8" evidence="2">
    <location>
        <begin position="329"/>
        <end position="349"/>
    </location>
</feature>
<feature type="topological domain" description="Cytoplasmic" evidence="2">
    <location>
        <begin position="350"/>
        <end position="358"/>
    </location>
</feature>
<feature type="transmembrane region" description="Helical; Name=9" evidence="2">
    <location>
        <begin position="359"/>
        <end position="379"/>
    </location>
</feature>
<feature type="topological domain" description="Extracellular" evidence="2">
    <location>
        <begin position="380"/>
        <end position="392"/>
    </location>
</feature>
<feature type="transmembrane region" description="Helical; Name=10" evidence="2">
    <location>
        <begin position="393"/>
        <end position="413"/>
    </location>
</feature>
<feature type="topological domain" description="Cytoplasmic" evidence="2">
    <location>
        <begin position="414"/>
        <end position="423"/>
    </location>
</feature>
<feature type="transmembrane region" description="Helical; Name=11" evidence="2">
    <location>
        <begin position="424"/>
        <end position="444"/>
    </location>
</feature>
<feature type="topological domain" description="Extracellular" evidence="2">
    <location>
        <begin position="445"/>
        <end position="451"/>
    </location>
</feature>
<feature type="transmembrane region" description="Helical; Name=12" evidence="2">
    <location>
        <begin position="452"/>
        <end position="472"/>
    </location>
</feature>
<feature type="topological domain" description="Cytoplasmic" evidence="2">
    <location>
        <begin position="473"/>
        <end position="520"/>
    </location>
</feature>
<feature type="region of interest" description="Disordered" evidence="3">
    <location>
        <begin position="493"/>
        <end position="520"/>
    </location>
</feature>
<feature type="binding site" evidence="1">
    <location>
        <position position="183"/>
    </location>
    <ligand>
        <name>D-glucose</name>
        <dbReference type="ChEBI" id="CHEBI:4167"/>
    </ligand>
</feature>
<feature type="binding site" evidence="1">
    <location>
        <begin position="304"/>
        <end position="305"/>
    </location>
    <ligand>
        <name>D-glucose</name>
        <dbReference type="ChEBI" id="CHEBI:4167"/>
    </ligand>
</feature>
<feature type="binding site" evidence="1">
    <location>
        <position position="310"/>
    </location>
    <ligand>
        <name>D-glucose</name>
        <dbReference type="ChEBI" id="CHEBI:4167"/>
    </ligand>
</feature>
<feature type="binding site" evidence="1">
    <location>
        <position position="339"/>
    </location>
    <ligand>
        <name>D-glucose</name>
        <dbReference type="ChEBI" id="CHEBI:4167"/>
    </ligand>
</feature>
<feature type="binding site" evidence="1">
    <location>
        <position position="402"/>
    </location>
    <ligand>
        <name>D-glucose</name>
        <dbReference type="ChEBI" id="CHEBI:4167"/>
    </ligand>
</feature>
<feature type="binding site" evidence="1">
    <location>
        <position position="410"/>
    </location>
    <ligand>
        <name>D-glucose</name>
        <dbReference type="ChEBI" id="CHEBI:4167"/>
    </ligand>
</feature>
<feature type="glycosylation site" description="N-linked (GlcNAc...) asparagine" evidence="2">
    <location>
        <position position="67"/>
    </location>
</feature>
<feature type="splice variant" id="VSP_014449" description="In isoform 3." evidence="10">
    <location>
        <begin position="1"/>
        <end position="359"/>
    </location>
</feature>
<feature type="splice variant" id="VSP_055253" description="In isoform 4." evidence="8">
    <original>MEFHNGGHVSGIGGFLVSLTSRMKPHTLAVTPALIFAITVATIGSFQFGYNTGVINAPETIIKEFINKTLTDKANAPPSEVLLTNLWSLSVAIFSVGGMIGSFSVGLFVNRFG</original>
    <variation>MLLR</variation>
    <location>
        <begin position="1"/>
        <end position="113"/>
    </location>
</feature>
<feature type="splice variant" id="VSP_014450" description="In isoform 2." evidence="7 8 9 12">
    <original>MEFHNGGHVSGIGGFLVSLTSRMKPHTLA</original>
    <variation>MDNRQN</variation>
    <location>
        <begin position="1"/>
        <end position="29"/>
    </location>
</feature>
<feature type="splice variant" id="VSP_055254" description="In isoform 5." evidence="8">
    <original>MEFHNGGHVSGIGGFLVSLTSRMKPHTLA</original>
    <variation>MQRLQLLRVEVLLGVKQGDEMRHFFFSSQTSTLEKSQNGGVGEE</variation>
    <location>
        <begin position="1"/>
        <end position="29"/>
    </location>
</feature>
<feature type="sequence variant" id="VAR_059852" description="In dbSNP:rs10845981.">
    <original>G</original>
    <variation>E</variation>
    <location>
        <position position="506"/>
    </location>
</feature>
<feature type="sequence conflict" description="In Ref. 2; AAQ63763." evidence="13" ref="2">
    <original>C</original>
    <variation>G</variation>
    <location>
        <position position="369"/>
    </location>
</feature>
<feature type="sequence conflict" description="In Ref. 2; AAQ63763." evidence="13" ref="2">
    <original>SL</original>
    <variation>PC</variation>
    <location>
        <begin position="376"/>
        <end position="377"/>
    </location>
</feature>
<feature type="sequence conflict" description="In Ref. 4; CAB53739." evidence="13" ref="4">
    <original>F</original>
    <variation>L</variation>
    <location>
        <position position="456"/>
    </location>
</feature>
<sequence>MEFHNGGHVSGIGGFLVSLTSRMKPHTLAVTPALIFAITVATIGSFQFGYNTGVINAPETIIKEFINKTLTDKANAPPSEVLLTNLWSLSVAIFSVGGMIGSFSVGLFVNRFGRRNSMLIVNLLAATGGCLMGLCKIAESVEMLILGRLVIGLFCGLCTGFVPMYIGEISPTALRGAFGTLNQLGIVIGILVAQIFGLELILGSEELWPVLLGFTILPAILQSAALPCCPESPRFLLINRKKEENATRILQRLWGTQDVSQDIQEMKDESARMSQEKQVTVLELFRVSSYRQPIIISIVLQLSQQLSGINAVFYYSTGIFKDAGVQQPIYATISAGVVNTIFTLLSLFLVERAGRRTLHMIGLGGMAFCSTLMTVSLLLKNHYNGMSFVCIGAILVFVACFEIGPGPIPWFIVAELFSQGPRPAAMAVAGCSNWTSNFLVGLLFPSAAYYLGAYVFIIFTGFLITFLAFTFFKVPETRGRTFEDITRAFEGQAHGADRSGKDGVMGMNSIEPAKETTTNV</sequence>
<proteinExistence type="evidence at protein level"/>